<reference key="1">
    <citation type="journal article" date="2001" name="Nature">
        <title>Genome sequence of Yersinia pestis, the causative agent of plague.</title>
        <authorList>
            <person name="Parkhill J."/>
            <person name="Wren B.W."/>
            <person name="Thomson N.R."/>
            <person name="Titball R.W."/>
            <person name="Holden M.T.G."/>
            <person name="Prentice M.B."/>
            <person name="Sebaihia M."/>
            <person name="James K.D."/>
            <person name="Churcher C.M."/>
            <person name="Mungall K.L."/>
            <person name="Baker S."/>
            <person name="Basham D."/>
            <person name="Bentley S.D."/>
            <person name="Brooks K."/>
            <person name="Cerdeno-Tarraga A.-M."/>
            <person name="Chillingworth T."/>
            <person name="Cronin A."/>
            <person name="Davies R.M."/>
            <person name="Davis P."/>
            <person name="Dougan G."/>
            <person name="Feltwell T."/>
            <person name="Hamlin N."/>
            <person name="Holroyd S."/>
            <person name="Jagels K."/>
            <person name="Karlyshev A.V."/>
            <person name="Leather S."/>
            <person name="Moule S."/>
            <person name="Oyston P.C.F."/>
            <person name="Quail M.A."/>
            <person name="Rutherford K.M."/>
            <person name="Simmonds M."/>
            <person name="Skelton J."/>
            <person name="Stevens K."/>
            <person name="Whitehead S."/>
            <person name="Barrell B.G."/>
        </authorList>
    </citation>
    <scope>NUCLEOTIDE SEQUENCE [LARGE SCALE GENOMIC DNA]</scope>
    <source>
        <strain>CO-92 / Biovar Orientalis</strain>
    </source>
</reference>
<reference key="2">
    <citation type="journal article" date="2002" name="J. Bacteriol.">
        <title>Genome sequence of Yersinia pestis KIM.</title>
        <authorList>
            <person name="Deng W."/>
            <person name="Burland V."/>
            <person name="Plunkett G. III"/>
            <person name="Boutin A."/>
            <person name="Mayhew G.F."/>
            <person name="Liss P."/>
            <person name="Perna N.T."/>
            <person name="Rose D.J."/>
            <person name="Mau B."/>
            <person name="Zhou S."/>
            <person name="Schwartz D.C."/>
            <person name="Fetherston J.D."/>
            <person name="Lindler L.E."/>
            <person name="Brubaker R.R."/>
            <person name="Plano G.V."/>
            <person name="Straley S.C."/>
            <person name="McDonough K.A."/>
            <person name="Nilles M.L."/>
            <person name="Matson J.S."/>
            <person name="Blattner F.R."/>
            <person name="Perry R.D."/>
        </authorList>
    </citation>
    <scope>NUCLEOTIDE SEQUENCE [LARGE SCALE GENOMIC DNA]</scope>
    <source>
        <strain>KIM10+ / Biovar Mediaevalis</strain>
    </source>
</reference>
<reference key="3">
    <citation type="journal article" date="2004" name="DNA Res.">
        <title>Complete genome sequence of Yersinia pestis strain 91001, an isolate avirulent to humans.</title>
        <authorList>
            <person name="Song Y."/>
            <person name="Tong Z."/>
            <person name="Wang J."/>
            <person name="Wang L."/>
            <person name="Guo Z."/>
            <person name="Han Y."/>
            <person name="Zhang J."/>
            <person name="Pei D."/>
            <person name="Zhou D."/>
            <person name="Qin H."/>
            <person name="Pang X."/>
            <person name="Han Y."/>
            <person name="Zhai J."/>
            <person name="Li M."/>
            <person name="Cui B."/>
            <person name="Qi Z."/>
            <person name="Jin L."/>
            <person name="Dai R."/>
            <person name="Chen F."/>
            <person name="Li S."/>
            <person name="Ye C."/>
            <person name="Du Z."/>
            <person name="Lin W."/>
            <person name="Wang J."/>
            <person name="Yu J."/>
            <person name="Yang H."/>
            <person name="Wang J."/>
            <person name="Huang P."/>
            <person name="Yang R."/>
        </authorList>
    </citation>
    <scope>NUCLEOTIDE SEQUENCE [LARGE SCALE GENOMIC DNA]</scope>
    <source>
        <strain>91001 / Biovar Mediaevalis</strain>
    </source>
</reference>
<dbReference type="EC" id="4.1.2.19" evidence="1"/>
<dbReference type="EMBL" id="AL590842">
    <property type="protein sequence ID" value="CAL19012.1"/>
    <property type="molecule type" value="Genomic_DNA"/>
</dbReference>
<dbReference type="EMBL" id="AE009952">
    <property type="protein sequence ID" value="AAM84173.1"/>
    <property type="molecule type" value="Genomic_DNA"/>
</dbReference>
<dbReference type="EMBL" id="AE017042">
    <property type="protein sequence ID" value="AAS60753.1"/>
    <property type="molecule type" value="Genomic_DNA"/>
</dbReference>
<dbReference type="PIR" id="AB0041">
    <property type="entry name" value="AB0041"/>
</dbReference>
<dbReference type="RefSeq" id="WP_002209103.1">
    <property type="nucleotide sequence ID" value="NZ_WUCM01000014.1"/>
</dbReference>
<dbReference type="RefSeq" id="YP_002345408.1">
    <property type="nucleotide sequence ID" value="NC_003143.1"/>
</dbReference>
<dbReference type="SMR" id="Q8ZJ03"/>
<dbReference type="STRING" id="214092.YPO0328"/>
<dbReference type="PaxDb" id="214092-YPO0328"/>
<dbReference type="DNASU" id="1145532"/>
<dbReference type="EnsemblBacteria" id="AAS60753">
    <property type="protein sequence ID" value="AAS60753"/>
    <property type="gene ID" value="YP_0483"/>
</dbReference>
<dbReference type="GeneID" id="57974277"/>
<dbReference type="KEGG" id="ype:YPO0328"/>
<dbReference type="KEGG" id="ypk:y0585"/>
<dbReference type="KEGG" id="ypm:YP_0483"/>
<dbReference type="PATRIC" id="fig|1028802.3.peg.1838"/>
<dbReference type="eggNOG" id="COG0235">
    <property type="taxonomic scope" value="Bacteria"/>
</dbReference>
<dbReference type="HOGENOM" id="CLU_076831_0_0_6"/>
<dbReference type="OMA" id="SHFMSHI"/>
<dbReference type="OrthoDB" id="9784634at2"/>
<dbReference type="UniPathway" id="UPA00541">
    <property type="reaction ID" value="UER00603"/>
</dbReference>
<dbReference type="Proteomes" id="UP000000815">
    <property type="component" value="Chromosome"/>
</dbReference>
<dbReference type="Proteomes" id="UP000001019">
    <property type="component" value="Chromosome"/>
</dbReference>
<dbReference type="Proteomes" id="UP000002490">
    <property type="component" value="Chromosome"/>
</dbReference>
<dbReference type="GO" id="GO:0005829">
    <property type="term" value="C:cytosol"/>
    <property type="evidence" value="ECO:0000318"/>
    <property type="project" value="GO_Central"/>
</dbReference>
<dbReference type="GO" id="GO:0016832">
    <property type="term" value="F:aldehyde-lyase activity"/>
    <property type="evidence" value="ECO:0000318"/>
    <property type="project" value="GO_Central"/>
</dbReference>
<dbReference type="GO" id="GO:0046872">
    <property type="term" value="F:metal ion binding"/>
    <property type="evidence" value="ECO:0007669"/>
    <property type="project" value="UniProtKB-KW"/>
</dbReference>
<dbReference type="GO" id="GO:0008994">
    <property type="term" value="F:rhamnulose-1-phosphate aldolase activity"/>
    <property type="evidence" value="ECO:0007669"/>
    <property type="project" value="UniProtKB-UniRule"/>
</dbReference>
<dbReference type="GO" id="GO:0019323">
    <property type="term" value="P:pentose catabolic process"/>
    <property type="evidence" value="ECO:0000318"/>
    <property type="project" value="GO_Central"/>
</dbReference>
<dbReference type="GO" id="GO:0019301">
    <property type="term" value="P:rhamnose catabolic process"/>
    <property type="evidence" value="ECO:0007669"/>
    <property type="project" value="UniProtKB-UniRule"/>
</dbReference>
<dbReference type="CDD" id="cd00398">
    <property type="entry name" value="Aldolase_II"/>
    <property type="match status" value="1"/>
</dbReference>
<dbReference type="FunFam" id="3.40.225.10:FF:000006">
    <property type="entry name" value="Rhamnulose-1-phosphate aldolase"/>
    <property type="match status" value="1"/>
</dbReference>
<dbReference type="Gene3D" id="3.40.225.10">
    <property type="entry name" value="Class II aldolase/adducin N-terminal domain"/>
    <property type="match status" value="1"/>
</dbReference>
<dbReference type="HAMAP" id="MF_00770">
    <property type="entry name" value="RhaD"/>
    <property type="match status" value="1"/>
</dbReference>
<dbReference type="InterPro" id="IPR050197">
    <property type="entry name" value="Aldolase_class_II_sugar_metab"/>
</dbReference>
<dbReference type="InterPro" id="IPR001303">
    <property type="entry name" value="Aldolase_II/adducin_N"/>
</dbReference>
<dbReference type="InterPro" id="IPR036409">
    <property type="entry name" value="Aldolase_II/adducin_N_sf"/>
</dbReference>
<dbReference type="InterPro" id="IPR013447">
    <property type="entry name" value="Rhamnulose-1-P_Aldolase"/>
</dbReference>
<dbReference type="NCBIfam" id="NF002963">
    <property type="entry name" value="PRK03634.1"/>
    <property type="match status" value="1"/>
</dbReference>
<dbReference type="NCBIfam" id="TIGR02624">
    <property type="entry name" value="rhamnu_1P_ald"/>
    <property type="match status" value="1"/>
</dbReference>
<dbReference type="PANTHER" id="PTHR22789">
    <property type="entry name" value="FUCULOSE PHOSPHATE ALDOLASE"/>
    <property type="match status" value="1"/>
</dbReference>
<dbReference type="PANTHER" id="PTHR22789:SF16">
    <property type="entry name" value="RHAMNULOSE-1-PHOSPHATE ALDOLASE"/>
    <property type="match status" value="1"/>
</dbReference>
<dbReference type="Pfam" id="PF00596">
    <property type="entry name" value="Aldolase_II"/>
    <property type="match status" value="1"/>
</dbReference>
<dbReference type="SMART" id="SM01007">
    <property type="entry name" value="Aldolase_II"/>
    <property type="match status" value="1"/>
</dbReference>
<dbReference type="SUPFAM" id="SSF53639">
    <property type="entry name" value="AraD/HMP-PK domain-like"/>
    <property type="match status" value="1"/>
</dbReference>
<organism>
    <name type="scientific">Yersinia pestis</name>
    <dbReference type="NCBI Taxonomy" id="632"/>
    <lineage>
        <taxon>Bacteria</taxon>
        <taxon>Pseudomonadati</taxon>
        <taxon>Pseudomonadota</taxon>
        <taxon>Gammaproteobacteria</taxon>
        <taxon>Enterobacterales</taxon>
        <taxon>Yersiniaceae</taxon>
        <taxon>Yersinia</taxon>
    </lineage>
</organism>
<keyword id="KW-0963">Cytoplasm</keyword>
<keyword id="KW-0456">Lyase</keyword>
<keyword id="KW-0479">Metal-binding</keyword>
<keyword id="KW-1185">Reference proteome</keyword>
<keyword id="KW-0684">Rhamnose metabolism</keyword>
<keyword id="KW-0862">Zinc</keyword>
<comment type="function">
    <text evidence="1">Catalyzes the reversible cleavage of L-rhamnulose-1-phosphate to dihydroxyacetone phosphate (DHAP) and L-lactaldehyde.</text>
</comment>
<comment type="catalytic activity">
    <reaction evidence="1">
        <text>L-rhamnulose 1-phosphate = (S)-lactaldehyde + dihydroxyacetone phosphate</text>
        <dbReference type="Rhea" id="RHEA:19689"/>
        <dbReference type="ChEBI" id="CHEBI:18041"/>
        <dbReference type="ChEBI" id="CHEBI:57642"/>
        <dbReference type="ChEBI" id="CHEBI:58313"/>
        <dbReference type="EC" id="4.1.2.19"/>
    </reaction>
</comment>
<comment type="cofactor">
    <cofactor evidence="1">
        <name>Zn(2+)</name>
        <dbReference type="ChEBI" id="CHEBI:29105"/>
    </cofactor>
    <text evidence="1">Binds 1 zinc ion per subunit.</text>
</comment>
<comment type="pathway">
    <text evidence="1">Carbohydrate degradation; L-rhamnose degradation; glycerone phosphate from L-rhamnose: step 3/3.</text>
</comment>
<comment type="subunit">
    <text evidence="1">Homotetramer.</text>
</comment>
<comment type="subcellular location">
    <subcellularLocation>
        <location evidence="1">Cytoplasm</location>
    </subcellularLocation>
</comment>
<comment type="similarity">
    <text evidence="1">Belongs to the aldolase class II family. RhaD subfamily.</text>
</comment>
<proteinExistence type="inferred from homology"/>
<gene>
    <name evidence="1" type="primary">rhaD</name>
    <name type="ordered locus">YPO0328</name>
    <name type="ordered locus">y0585</name>
    <name type="ordered locus">YP_0483</name>
</gene>
<protein>
    <recommendedName>
        <fullName evidence="1">Rhamnulose-1-phosphate aldolase</fullName>
        <ecNumber evidence="1">4.1.2.19</ecNumber>
    </recommendedName>
</protein>
<feature type="chain" id="PRO_0000209672" description="Rhamnulose-1-phosphate aldolase">
    <location>
        <begin position="1"/>
        <end position="274"/>
    </location>
</feature>
<feature type="active site" evidence="1">
    <location>
        <position position="117"/>
    </location>
</feature>
<feature type="binding site" evidence="1">
    <location>
        <position position="141"/>
    </location>
    <ligand>
        <name>Zn(2+)</name>
        <dbReference type="ChEBI" id="CHEBI:29105"/>
    </ligand>
</feature>
<feature type="binding site" evidence="1">
    <location>
        <position position="143"/>
    </location>
    <ligand>
        <name>Zn(2+)</name>
        <dbReference type="ChEBI" id="CHEBI:29105"/>
    </ligand>
</feature>
<feature type="binding site" evidence="1">
    <location>
        <position position="212"/>
    </location>
    <ligand>
        <name>Zn(2+)</name>
        <dbReference type="ChEBI" id="CHEBI:29105"/>
    </ligand>
</feature>
<accession>Q8ZJ03</accession>
<accession>Q0WJY0</accession>
<sequence length="274" mass="30352">MQAILSSWFIQGMIKATSDMWHKGWDERNGGNISLRLLAEEVEPYRRDFYQQPRKVELTQPAPELANSWFLVTGSGKFFRNVELNPAENLVLLQVSNDGMAYHIHWGLTQGGLPTSELAAHFQSHIVRMQVSGGTNRVIMHCHATNLIALSYVQKLENASFTRLLWEGSTECLVVFPDGIGIVPWMVPGTDGIGTQTAEQMREHSLVLWPFHGIFGSGPTLDDAFGLIDTAEKSAEIMVKVLSMGGKKQTISREQLIALAARFDVTPMAAALDA</sequence>
<name>RHAD_YERPE</name>
<evidence type="ECO:0000255" key="1">
    <source>
        <dbReference type="HAMAP-Rule" id="MF_00770"/>
    </source>
</evidence>